<keyword id="KW-0328">Glycosyltransferase</keyword>
<keyword id="KW-0460">Magnesium</keyword>
<keyword id="KW-0665">Pyrimidine biosynthesis</keyword>
<keyword id="KW-0808">Transferase</keyword>
<protein>
    <recommendedName>
        <fullName evidence="1">Orotate phosphoribosyltransferase</fullName>
        <shortName evidence="1">OPRT</shortName>
        <shortName evidence="1">OPRTase</shortName>
        <ecNumber evidence="1">2.4.2.10</ecNumber>
    </recommendedName>
</protein>
<reference key="1">
    <citation type="journal article" date="2006" name="Proc. Natl. Acad. Sci. U.S.A.">
        <title>The complete genome sequence of a chronic atrophic gastritis Helicobacter pylori strain: evolution during disease progression.</title>
        <authorList>
            <person name="Oh J.D."/>
            <person name="Kling-Baeckhed H."/>
            <person name="Giannakis M."/>
            <person name="Xu J."/>
            <person name="Fulton R.S."/>
            <person name="Fulton L.A."/>
            <person name="Cordum H.S."/>
            <person name="Wang C."/>
            <person name="Elliott G."/>
            <person name="Edwards J."/>
            <person name="Mardis E.R."/>
            <person name="Engstrand L.G."/>
            <person name="Gordon J.I."/>
        </authorList>
    </citation>
    <scope>NUCLEOTIDE SEQUENCE [LARGE SCALE GENOMIC DNA]</scope>
    <source>
        <strain>HPAG1</strain>
    </source>
</reference>
<accession>Q1CS04</accession>
<sequence>MDIKACYQNAQALLEGHFLLSSGFHSNYYLQSAKVLEDPKLAEQLALELAKQIQEAHLNIECVCSPAIGGILAGYELARALGVRFIFTERVDNIMTLRRGFEVKKNEKILVCEDIITTGKSAMECAKVLEEKGAHIVAFGALANRGICKRAHSHLKAQEGACLPSHLPLFALEDFVFDMHKPSSCPLCATSVAIKPGSRGN</sequence>
<organism>
    <name type="scientific">Helicobacter pylori (strain HPAG1)</name>
    <dbReference type="NCBI Taxonomy" id="357544"/>
    <lineage>
        <taxon>Bacteria</taxon>
        <taxon>Pseudomonadati</taxon>
        <taxon>Campylobacterota</taxon>
        <taxon>Epsilonproteobacteria</taxon>
        <taxon>Campylobacterales</taxon>
        <taxon>Helicobacteraceae</taxon>
        <taxon>Helicobacter</taxon>
    </lineage>
</organism>
<comment type="function">
    <text evidence="1">Catalyzes the transfer of a ribosyl phosphate group from 5-phosphoribose 1-diphosphate to orotate, leading to the formation of orotidine monophosphate (OMP).</text>
</comment>
<comment type="catalytic activity">
    <reaction evidence="1">
        <text>orotidine 5'-phosphate + diphosphate = orotate + 5-phospho-alpha-D-ribose 1-diphosphate</text>
        <dbReference type="Rhea" id="RHEA:10380"/>
        <dbReference type="ChEBI" id="CHEBI:30839"/>
        <dbReference type="ChEBI" id="CHEBI:33019"/>
        <dbReference type="ChEBI" id="CHEBI:57538"/>
        <dbReference type="ChEBI" id="CHEBI:58017"/>
        <dbReference type="EC" id="2.4.2.10"/>
    </reaction>
</comment>
<comment type="cofactor">
    <cofactor evidence="1">
        <name>Mg(2+)</name>
        <dbReference type="ChEBI" id="CHEBI:18420"/>
    </cofactor>
</comment>
<comment type="pathway">
    <text evidence="1">Pyrimidine metabolism; UMP biosynthesis via de novo pathway; UMP from orotate: step 1/2.</text>
</comment>
<comment type="subunit">
    <text evidence="1">Homodimer.</text>
</comment>
<comment type="similarity">
    <text evidence="1">Belongs to the purine/pyrimidine phosphoribosyltransferase family. PyrE subfamily.</text>
</comment>
<feature type="chain" id="PRO_1000066239" description="Orotate phosphoribosyltransferase">
    <location>
        <begin position="1"/>
        <end position="201"/>
    </location>
</feature>
<feature type="binding site" evidence="1">
    <location>
        <begin position="113"/>
        <end position="121"/>
    </location>
    <ligand>
        <name>5-phospho-alpha-D-ribose 1-diphosphate</name>
        <dbReference type="ChEBI" id="CHEBI:58017"/>
    </ligand>
</feature>
<feature type="binding site" evidence="1">
    <location>
        <position position="117"/>
    </location>
    <ligand>
        <name>orotate</name>
        <dbReference type="ChEBI" id="CHEBI:30839"/>
    </ligand>
</feature>
<feature type="binding site" evidence="1">
    <location>
        <position position="145"/>
    </location>
    <ligand>
        <name>orotate</name>
        <dbReference type="ChEBI" id="CHEBI:30839"/>
    </ligand>
</feature>
<evidence type="ECO:0000255" key="1">
    <source>
        <dbReference type="HAMAP-Rule" id="MF_01208"/>
    </source>
</evidence>
<name>PYRE_HELPH</name>
<gene>
    <name evidence="1" type="primary">pyrE</name>
    <name type="ordered locus">HPAG1_1201</name>
</gene>
<proteinExistence type="inferred from homology"/>
<dbReference type="EC" id="2.4.2.10" evidence="1"/>
<dbReference type="EMBL" id="CP000241">
    <property type="protein sequence ID" value="ABF85268.1"/>
    <property type="molecule type" value="Genomic_DNA"/>
</dbReference>
<dbReference type="RefSeq" id="WP_000351593.1">
    <property type="nucleotide sequence ID" value="NC_008086.1"/>
</dbReference>
<dbReference type="SMR" id="Q1CS04"/>
<dbReference type="KEGG" id="hpa:HPAG1_1201"/>
<dbReference type="HOGENOM" id="CLU_074878_3_0_7"/>
<dbReference type="UniPathway" id="UPA00070">
    <property type="reaction ID" value="UER00119"/>
</dbReference>
<dbReference type="GO" id="GO:0000287">
    <property type="term" value="F:magnesium ion binding"/>
    <property type="evidence" value="ECO:0007669"/>
    <property type="project" value="UniProtKB-UniRule"/>
</dbReference>
<dbReference type="GO" id="GO:0004588">
    <property type="term" value="F:orotate phosphoribosyltransferase activity"/>
    <property type="evidence" value="ECO:0007669"/>
    <property type="project" value="UniProtKB-UniRule"/>
</dbReference>
<dbReference type="GO" id="GO:0044205">
    <property type="term" value="P:'de novo' UMP biosynthetic process"/>
    <property type="evidence" value="ECO:0007669"/>
    <property type="project" value="UniProtKB-UniRule"/>
</dbReference>
<dbReference type="GO" id="GO:0019856">
    <property type="term" value="P:pyrimidine nucleobase biosynthetic process"/>
    <property type="evidence" value="ECO:0007669"/>
    <property type="project" value="InterPro"/>
</dbReference>
<dbReference type="CDD" id="cd06223">
    <property type="entry name" value="PRTases_typeI"/>
    <property type="match status" value="1"/>
</dbReference>
<dbReference type="Gene3D" id="3.40.50.2020">
    <property type="match status" value="1"/>
</dbReference>
<dbReference type="HAMAP" id="MF_01208">
    <property type="entry name" value="PyrE"/>
    <property type="match status" value="1"/>
</dbReference>
<dbReference type="InterPro" id="IPR023031">
    <property type="entry name" value="OPRT"/>
</dbReference>
<dbReference type="InterPro" id="IPR006273">
    <property type="entry name" value="Orotate_PRibTrfase_bac"/>
</dbReference>
<dbReference type="InterPro" id="IPR000836">
    <property type="entry name" value="PRibTrfase_dom"/>
</dbReference>
<dbReference type="InterPro" id="IPR029057">
    <property type="entry name" value="PRTase-like"/>
</dbReference>
<dbReference type="NCBIfam" id="TIGR01367">
    <property type="entry name" value="pyrE_Therm"/>
    <property type="match status" value="1"/>
</dbReference>
<dbReference type="PANTHER" id="PTHR19278">
    <property type="entry name" value="OROTATE PHOSPHORIBOSYLTRANSFERASE"/>
    <property type="match status" value="1"/>
</dbReference>
<dbReference type="PANTHER" id="PTHR19278:SF9">
    <property type="entry name" value="URIDINE 5'-MONOPHOSPHATE SYNTHASE"/>
    <property type="match status" value="1"/>
</dbReference>
<dbReference type="Pfam" id="PF00156">
    <property type="entry name" value="Pribosyltran"/>
    <property type="match status" value="1"/>
</dbReference>
<dbReference type="SUPFAM" id="SSF53271">
    <property type="entry name" value="PRTase-like"/>
    <property type="match status" value="1"/>
</dbReference>
<dbReference type="PROSITE" id="PS00103">
    <property type="entry name" value="PUR_PYR_PR_TRANSFER"/>
    <property type="match status" value="1"/>
</dbReference>